<sequence length="400" mass="42011">MSHRVLGTERISPREEHVLTPNVTAILVAAGRGTRAGGGLAKQWRPLGARRVIDWTLAAFDRATQVSELLVVLHPEDMDLAATLTAAKPLRCVSGGATRSASVACALAAVADPEAIVLIHDAARPVVSADLIARVVAGVIETGAAAPALPVVDALWTGAGDRVTGMQPRDGLYRAQTPQGFHAGAIRDAHAAATGAAADDVEIARAAGMPVAIVAGDEQNFKITYPQDFARAAALLKERDKMDIRTGNGYDVHRFGTGDAVILCGVEVPHDRALMGHSDADVGMHAVTDAIYGALGDGDIGQHFPPSDPQWKGAASEIFLRHAVALAAERGYTITHMDCTLVCERPKIGPYHAVMKAKMSELMGLQPDQVSVKATTSERLGFTGREEGIAALATVTLVRT</sequence>
<comment type="function">
    <text evidence="1">Bifunctional enzyme that catalyzes the formation of 4-diphosphocytidyl-2-C-methyl-D-erythritol from CTP and 2-C-methyl-D-erythritol 4-phosphate (MEP) (IspD), and catalyzes the conversion of 4-diphosphocytidyl-2-C-methyl-D-erythritol 2-phosphate (CDP-ME2P) to 2-C-methyl-D-erythritol 2,4-cyclodiphosphate (ME-CPP) with a corresponding release of cytidine 5-monophosphate (CMP) (IspF).</text>
</comment>
<comment type="catalytic activity">
    <reaction evidence="1">
        <text>2-C-methyl-D-erythritol 4-phosphate + CTP + H(+) = 4-CDP-2-C-methyl-D-erythritol + diphosphate</text>
        <dbReference type="Rhea" id="RHEA:13429"/>
        <dbReference type="ChEBI" id="CHEBI:15378"/>
        <dbReference type="ChEBI" id="CHEBI:33019"/>
        <dbReference type="ChEBI" id="CHEBI:37563"/>
        <dbReference type="ChEBI" id="CHEBI:57823"/>
        <dbReference type="ChEBI" id="CHEBI:58262"/>
        <dbReference type="EC" id="2.7.7.60"/>
    </reaction>
</comment>
<comment type="catalytic activity">
    <reaction evidence="1">
        <text>4-CDP-2-C-methyl-D-erythritol 2-phosphate = 2-C-methyl-D-erythritol 2,4-cyclic diphosphate + CMP</text>
        <dbReference type="Rhea" id="RHEA:23864"/>
        <dbReference type="ChEBI" id="CHEBI:57919"/>
        <dbReference type="ChEBI" id="CHEBI:58483"/>
        <dbReference type="ChEBI" id="CHEBI:60377"/>
        <dbReference type="EC" id="4.6.1.12"/>
    </reaction>
</comment>
<comment type="cofactor">
    <cofactor evidence="1">
        <name>a divalent metal cation</name>
        <dbReference type="ChEBI" id="CHEBI:60240"/>
    </cofactor>
</comment>
<comment type="pathway">
    <text evidence="1">Isoprenoid biosynthesis; isopentenyl diphosphate biosynthesis via DXP pathway; isopentenyl diphosphate from 1-deoxy-D-xylulose 5-phosphate: step 2/6.</text>
</comment>
<comment type="pathway">
    <text evidence="1">Isoprenoid biosynthesis; isopentenyl diphosphate biosynthesis via DXP pathway; isopentenyl diphosphate from 1-deoxy-D-xylulose 5-phosphate: step 4/6.</text>
</comment>
<comment type="similarity">
    <text evidence="1">In the N-terminal section; belongs to the IspD/TarI cytidylyltransferase family. IspD subfamily.</text>
</comment>
<comment type="similarity">
    <text evidence="1">In the C-terminal section; belongs to the IspF family.</text>
</comment>
<proteinExistence type="inferred from homology"/>
<name>ISPDF_DINSH</name>
<accession>A8LKV5</accession>
<protein>
    <recommendedName>
        <fullName evidence="1">Bifunctional enzyme IspD/IspF</fullName>
    </recommendedName>
    <domain>
        <recommendedName>
            <fullName evidence="1">2-C-methyl-D-erythritol 4-phosphate cytidylyltransferase</fullName>
            <ecNumber evidence="1">2.7.7.60</ecNumber>
        </recommendedName>
        <alternativeName>
            <fullName evidence="1">4-diphosphocytidyl-2C-methyl-D-erythritol synthase</fullName>
        </alternativeName>
        <alternativeName>
            <fullName evidence="1">MEP cytidylyltransferase</fullName>
            <shortName evidence="1">MCT</shortName>
        </alternativeName>
    </domain>
    <domain>
        <recommendedName>
            <fullName evidence="1">2-C-methyl-D-erythritol 2,4-cyclodiphosphate synthase</fullName>
            <shortName evidence="1">MECDP-synthase</shortName>
            <shortName evidence="1">MECPP-synthase</shortName>
            <shortName evidence="1">MECPS</shortName>
            <ecNumber evidence="1">4.6.1.12</ecNumber>
        </recommendedName>
    </domain>
</protein>
<gene>
    <name evidence="1" type="primary">ispDF</name>
    <name type="ordered locus">Dshi_1577</name>
</gene>
<dbReference type="EC" id="2.7.7.60" evidence="1"/>
<dbReference type="EC" id="4.6.1.12" evidence="1"/>
<dbReference type="EMBL" id="CP000830">
    <property type="protein sequence ID" value="ABV93319.1"/>
    <property type="molecule type" value="Genomic_DNA"/>
</dbReference>
<dbReference type="SMR" id="A8LKV5"/>
<dbReference type="STRING" id="398580.Dshi_1577"/>
<dbReference type="KEGG" id="dsh:Dshi_1577"/>
<dbReference type="eggNOG" id="COG0245">
    <property type="taxonomic scope" value="Bacteria"/>
</dbReference>
<dbReference type="eggNOG" id="COG1211">
    <property type="taxonomic scope" value="Bacteria"/>
</dbReference>
<dbReference type="HOGENOM" id="CLU_042800_2_3_5"/>
<dbReference type="OrthoDB" id="9804336at2"/>
<dbReference type="UniPathway" id="UPA00056">
    <property type="reaction ID" value="UER00093"/>
</dbReference>
<dbReference type="UniPathway" id="UPA00056">
    <property type="reaction ID" value="UER00095"/>
</dbReference>
<dbReference type="Proteomes" id="UP000006833">
    <property type="component" value="Chromosome"/>
</dbReference>
<dbReference type="GO" id="GO:0008685">
    <property type="term" value="F:2-C-methyl-D-erythritol 2,4-cyclodiphosphate synthase activity"/>
    <property type="evidence" value="ECO:0007669"/>
    <property type="project" value="UniProtKB-UniRule"/>
</dbReference>
<dbReference type="GO" id="GO:0050518">
    <property type="term" value="F:2-C-methyl-D-erythritol 4-phosphate cytidylyltransferase activity"/>
    <property type="evidence" value="ECO:0007669"/>
    <property type="project" value="UniProtKB-UniRule"/>
</dbReference>
<dbReference type="GO" id="GO:0046872">
    <property type="term" value="F:metal ion binding"/>
    <property type="evidence" value="ECO:0007669"/>
    <property type="project" value="UniProtKB-KW"/>
</dbReference>
<dbReference type="GO" id="GO:0019288">
    <property type="term" value="P:isopentenyl diphosphate biosynthetic process, methylerythritol 4-phosphate pathway"/>
    <property type="evidence" value="ECO:0007669"/>
    <property type="project" value="UniProtKB-UniRule"/>
</dbReference>
<dbReference type="GO" id="GO:0016114">
    <property type="term" value="P:terpenoid biosynthetic process"/>
    <property type="evidence" value="ECO:0007669"/>
    <property type="project" value="InterPro"/>
</dbReference>
<dbReference type="CDD" id="cd02516">
    <property type="entry name" value="CDP-ME_synthetase"/>
    <property type="match status" value="1"/>
</dbReference>
<dbReference type="CDD" id="cd00554">
    <property type="entry name" value="MECDP_synthase"/>
    <property type="match status" value="1"/>
</dbReference>
<dbReference type="Gene3D" id="3.30.1330.50">
    <property type="entry name" value="2-C-methyl-D-erythritol 2,4-cyclodiphosphate synthase"/>
    <property type="match status" value="1"/>
</dbReference>
<dbReference type="Gene3D" id="3.90.550.10">
    <property type="entry name" value="Spore Coat Polysaccharide Biosynthesis Protein SpsA, Chain A"/>
    <property type="match status" value="1"/>
</dbReference>
<dbReference type="HAMAP" id="MF_00108">
    <property type="entry name" value="IspD"/>
    <property type="match status" value="1"/>
</dbReference>
<dbReference type="HAMAP" id="MF_01520">
    <property type="entry name" value="IspDF"/>
    <property type="match status" value="1"/>
</dbReference>
<dbReference type="HAMAP" id="MF_00107">
    <property type="entry name" value="IspF"/>
    <property type="match status" value="1"/>
</dbReference>
<dbReference type="InterPro" id="IPR001228">
    <property type="entry name" value="IspD"/>
</dbReference>
<dbReference type="InterPro" id="IPR026596">
    <property type="entry name" value="IspD/F"/>
</dbReference>
<dbReference type="InterPro" id="IPR034683">
    <property type="entry name" value="IspD/TarI"/>
</dbReference>
<dbReference type="InterPro" id="IPR018294">
    <property type="entry name" value="ISPD_synthase_CS"/>
</dbReference>
<dbReference type="InterPro" id="IPR003526">
    <property type="entry name" value="MECDP_synthase"/>
</dbReference>
<dbReference type="InterPro" id="IPR020555">
    <property type="entry name" value="MECDP_synthase_CS"/>
</dbReference>
<dbReference type="InterPro" id="IPR036571">
    <property type="entry name" value="MECDP_synthase_sf"/>
</dbReference>
<dbReference type="InterPro" id="IPR029044">
    <property type="entry name" value="Nucleotide-diphossugar_trans"/>
</dbReference>
<dbReference type="NCBIfam" id="TIGR00453">
    <property type="entry name" value="ispD"/>
    <property type="match status" value="1"/>
</dbReference>
<dbReference type="NCBIfam" id="TIGR00151">
    <property type="entry name" value="ispF"/>
    <property type="match status" value="1"/>
</dbReference>
<dbReference type="NCBIfam" id="NF006899">
    <property type="entry name" value="PRK09382.1"/>
    <property type="match status" value="1"/>
</dbReference>
<dbReference type="PANTHER" id="PTHR43181">
    <property type="entry name" value="2-C-METHYL-D-ERYTHRITOL 2,4-CYCLODIPHOSPHATE SYNTHASE, CHLOROPLASTIC"/>
    <property type="match status" value="1"/>
</dbReference>
<dbReference type="PANTHER" id="PTHR43181:SF1">
    <property type="entry name" value="2-C-METHYL-D-ERYTHRITOL 2,4-CYCLODIPHOSPHATE SYNTHASE, CHLOROPLASTIC"/>
    <property type="match status" value="1"/>
</dbReference>
<dbReference type="Pfam" id="PF01128">
    <property type="entry name" value="IspD"/>
    <property type="match status" value="1"/>
</dbReference>
<dbReference type="Pfam" id="PF02542">
    <property type="entry name" value="YgbB"/>
    <property type="match status" value="1"/>
</dbReference>
<dbReference type="SUPFAM" id="SSF69765">
    <property type="entry name" value="IpsF-like"/>
    <property type="match status" value="1"/>
</dbReference>
<dbReference type="SUPFAM" id="SSF53448">
    <property type="entry name" value="Nucleotide-diphospho-sugar transferases"/>
    <property type="match status" value="1"/>
</dbReference>
<dbReference type="PROSITE" id="PS01295">
    <property type="entry name" value="ISPD"/>
    <property type="match status" value="1"/>
</dbReference>
<dbReference type="PROSITE" id="PS01350">
    <property type="entry name" value="ISPF"/>
    <property type="match status" value="1"/>
</dbReference>
<feature type="chain" id="PRO_0000333305" description="Bifunctional enzyme IspD/IspF">
    <location>
        <begin position="1"/>
        <end position="400"/>
    </location>
</feature>
<feature type="region of interest" description="2-C-methyl-D-erythritol 4-phosphate cytidylyltransferase" evidence="1">
    <location>
        <begin position="1"/>
        <end position="244"/>
    </location>
</feature>
<feature type="region of interest" description="2-C-methyl-D-erythritol 2,4-cyclodiphosphate synthase" evidence="1">
    <location>
        <begin position="245"/>
        <end position="400"/>
    </location>
</feature>
<feature type="binding site" evidence="1">
    <location>
        <begin position="251"/>
        <end position="253"/>
    </location>
    <ligand>
        <name>4-CDP-2-C-methyl-D-erythritol 2-phosphate</name>
        <dbReference type="ChEBI" id="CHEBI:57919"/>
    </ligand>
</feature>
<feature type="binding site" evidence="1">
    <location>
        <position position="251"/>
    </location>
    <ligand>
        <name>a divalent metal cation</name>
        <dbReference type="ChEBI" id="CHEBI:60240"/>
    </ligand>
</feature>
<feature type="binding site" evidence="1">
    <location>
        <position position="253"/>
    </location>
    <ligand>
        <name>a divalent metal cation</name>
        <dbReference type="ChEBI" id="CHEBI:60240"/>
    </ligand>
</feature>
<feature type="binding site" evidence="1">
    <location>
        <begin position="277"/>
        <end position="278"/>
    </location>
    <ligand>
        <name>4-CDP-2-C-methyl-D-erythritol 2-phosphate</name>
        <dbReference type="ChEBI" id="CHEBI:57919"/>
    </ligand>
</feature>
<feature type="binding site" evidence="1">
    <location>
        <position position="285"/>
    </location>
    <ligand>
        <name>a divalent metal cation</name>
        <dbReference type="ChEBI" id="CHEBI:60240"/>
    </ligand>
</feature>
<feature type="binding site" evidence="1">
    <location>
        <begin position="299"/>
        <end position="301"/>
    </location>
    <ligand>
        <name>4-CDP-2-C-methyl-D-erythritol 2-phosphate</name>
        <dbReference type="ChEBI" id="CHEBI:57919"/>
    </ligand>
</feature>
<feature type="binding site" evidence="1">
    <location>
        <begin position="375"/>
        <end position="378"/>
    </location>
    <ligand>
        <name>4-CDP-2-C-methyl-D-erythritol 2-phosphate</name>
        <dbReference type="ChEBI" id="CHEBI:57919"/>
    </ligand>
</feature>
<feature type="binding site" evidence="1">
    <location>
        <position position="382"/>
    </location>
    <ligand>
        <name>4-CDP-2-C-methyl-D-erythritol 2-phosphate</name>
        <dbReference type="ChEBI" id="CHEBI:57919"/>
    </ligand>
</feature>
<feature type="binding site" evidence="1">
    <location>
        <position position="385"/>
    </location>
    <ligand>
        <name>4-CDP-2-C-methyl-D-erythritol 2-phosphate</name>
        <dbReference type="ChEBI" id="CHEBI:57919"/>
    </ligand>
</feature>
<feature type="site" description="Transition state stabilizer" evidence="1">
    <location>
        <position position="35"/>
    </location>
</feature>
<feature type="site" description="Transition state stabilizer" evidence="1">
    <location>
        <position position="42"/>
    </location>
</feature>
<feature type="site" description="Positions MEP for the nucleophilic attack" evidence="1">
    <location>
        <position position="169"/>
    </location>
</feature>
<feature type="site" description="Positions MEP for the nucleophilic attack" evidence="1">
    <location>
        <position position="222"/>
    </location>
</feature>
<feature type="site" description="Transition state stabilizer" evidence="1">
    <location>
        <position position="277"/>
    </location>
</feature>
<feature type="site" description="Transition state stabilizer" evidence="1">
    <location>
        <position position="376"/>
    </location>
</feature>
<keyword id="KW-0414">Isoprene biosynthesis</keyword>
<keyword id="KW-0456">Lyase</keyword>
<keyword id="KW-0479">Metal-binding</keyword>
<keyword id="KW-0511">Multifunctional enzyme</keyword>
<keyword id="KW-0548">Nucleotidyltransferase</keyword>
<keyword id="KW-1185">Reference proteome</keyword>
<keyword id="KW-0808">Transferase</keyword>
<evidence type="ECO:0000255" key="1">
    <source>
        <dbReference type="HAMAP-Rule" id="MF_01520"/>
    </source>
</evidence>
<organism>
    <name type="scientific">Dinoroseobacter shibae (strain DSM 16493 / NCIMB 14021 / DFL 12)</name>
    <dbReference type="NCBI Taxonomy" id="398580"/>
    <lineage>
        <taxon>Bacteria</taxon>
        <taxon>Pseudomonadati</taxon>
        <taxon>Pseudomonadota</taxon>
        <taxon>Alphaproteobacteria</taxon>
        <taxon>Rhodobacterales</taxon>
        <taxon>Roseobacteraceae</taxon>
        <taxon>Dinoroseobacter</taxon>
    </lineage>
</organism>
<reference key="1">
    <citation type="journal article" date="2010" name="ISME J.">
        <title>The complete genome sequence of the algal symbiont Dinoroseobacter shibae: a hitchhiker's guide to life in the sea.</title>
        <authorList>
            <person name="Wagner-Dobler I."/>
            <person name="Ballhausen B."/>
            <person name="Berger M."/>
            <person name="Brinkhoff T."/>
            <person name="Buchholz I."/>
            <person name="Bunk B."/>
            <person name="Cypionka H."/>
            <person name="Daniel R."/>
            <person name="Drepper T."/>
            <person name="Gerdts G."/>
            <person name="Hahnke S."/>
            <person name="Han C."/>
            <person name="Jahn D."/>
            <person name="Kalhoefer D."/>
            <person name="Kiss H."/>
            <person name="Klenk H.P."/>
            <person name="Kyrpides N."/>
            <person name="Liebl W."/>
            <person name="Liesegang H."/>
            <person name="Meincke L."/>
            <person name="Pati A."/>
            <person name="Petersen J."/>
            <person name="Piekarski T."/>
            <person name="Pommerenke C."/>
            <person name="Pradella S."/>
            <person name="Pukall R."/>
            <person name="Rabus R."/>
            <person name="Stackebrandt E."/>
            <person name="Thole S."/>
            <person name="Thompson L."/>
            <person name="Tielen P."/>
            <person name="Tomasch J."/>
            <person name="von Jan M."/>
            <person name="Wanphrut N."/>
            <person name="Wichels A."/>
            <person name="Zech H."/>
            <person name="Simon M."/>
        </authorList>
    </citation>
    <scope>NUCLEOTIDE SEQUENCE [LARGE SCALE GENOMIC DNA]</scope>
    <source>
        <strain>DSM 16493 / NCIMB 14021 / DFL 12</strain>
    </source>
</reference>